<proteinExistence type="evidence at protein level"/>
<name>PARP4_HUMAN</name>
<comment type="function">
    <text evidence="12">Mono-ADP-ribosyltransferase that mediates mono-ADP-ribosylation of target proteins.</text>
</comment>
<comment type="catalytic activity">
    <reaction evidence="19">
        <text>L-aspartyl-[protein] + NAD(+) = 4-O-(ADP-D-ribosyl)-L-aspartyl-[protein] + nicotinamide</text>
        <dbReference type="Rhea" id="RHEA:54424"/>
        <dbReference type="Rhea" id="RHEA-COMP:9867"/>
        <dbReference type="Rhea" id="RHEA-COMP:13832"/>
        <dbReference type="ChEBI" id="CHEBI:17154"/>
        <dbReference type="ChEBI" id="CHEBI:29961"/>
        <dbReference type="ChEBI" id="CHEBI:57540"/>
        <dbReference type="ChEBI" id="CHEBI:138102"/>
    </reaction>
</comment>
<comment type="catalytic activity">
    <reaction evidence="19">
        <text>L-glutamyl-[protein] + NAD(+) = 5-O-(ADP-D-ribosyl)-L-glutamyl-[protein] + nicotinamide</text>
        <dbReference type="Rhea" id="RHEA:58224"/>
        <dbReference type="Rhea" id="RHEA-COMP:10208"/>
        <dbReference type="Rhea" id="RHEA-COMP:15089"/>
        <dbReference type="ChEBI" id="CHEBI:17154"/>
        <dbReference type="ChEBI" id="CHEBI:29973"/>
        <dbReference type="ChEBI" id="CHEBI:57540"/>
        <dbReference type="ChEBI" id="CHEBI:142540"/>
    </reaction>
</comment>
<comment type="subunit">
    <text evidence="8 9 11">Component of the vault ribonucleoprotein particle, at least composed of MVP, PARP4 and one or more vault RNAs (vRNAs) (PubMed:10477748). Interacts with TEP1 (PubMed:10551828, PubMed:15169895).</text>
</comment>
<comment type="interaction">
    <interactant intactId="EBI-2623021">
        <id>Q9UKK3</id>
    </interactant>
    <interactant intactId="EBI-6248094">
        <id>Q9Q2G4</id>
        <label>ORF</label>
    </interactant>
    <organismsDiffer>true</organismsDiffer>
    <experiments>3</experiments>
</comment>
<comment type="subcellular location">
    <subcellularLocation>
        <location evidence="8">Cytoplasm</location>
    </subcellularLocation>
    <subcellularLocation>
        <location evidence="8">Nucleus</location>
    </subcellularLocation>
    <subcellularLocation>
        <location evidence="8">Cytoplasm</location>
        <location evidence="8">Cytoskeleton</location>
        <location evidence="8">Spindle</location>
    </subcellularLocation>
    <text evidence="8">Also found in the nucleus, associated with mitotic spindles.</text>
</comment>
<comment type="tissue specificity">
    <text evidence="8">Widely expressed; the highest levels are in the kidney; also detected in heart, placenta, lung, liver, skeletal muscle, spleen, leukocytes and pancreas.</text>
</comment>
<comment type="similarity">
    <text evidence="19">Belongs to the ARTD/PARP family.</text>
</comment>
<comment type="caution">
    <text evidence="8 12">Was initially thought to mediate to mediate poly-ADP-ribosylation of proteins (PubMed:10477748). However, it was later shown to act as a mono-ADP-ribosyltransferase (PubMed:25043379).</text>
</comment>
<comment type="sequence caution" evidence="19">
    <conflict type="erroneous initiation">
        <sequence resource="EMBL-CDS" id="BAA11494"/>
    </conflict>
    <text>Extended N-terminus.</text>
</comment>
<reference key="1">
    <citation type="journal article" date="1999" name="J. Cell Biol.">
        <title>The 193 kDa vault protein, VPARP, is a novel poly(ADP-ribose) polymerase.</title>
        <authorList>
            <person name="Kickhoefer V.A."/>
            <person name="Siva A.C."/>
            <person name="Kedersha N.L."/>
            <person name="Inman E.M."/>
            <person name="Ruland C."/>
            <person name="Streuli M."/>
            <person name="Rome L.H."/>
        </authorList>
    </citation>
    <scope>NUCLEOTIDE SEQUENCE [MRNA]</scope>
    <scope>PROTEIN SEQUENCE OF 306-319</scope>
    <scope>SUBCELLULAR LOCATION</scope>
    <scope>TISSUE SPECIFICITY</scope>
    <scope>VARIANT THR-899</scope>
</reference>
<reference key="2">
    <citation type="journal article" date="1999" name="Genomics">
        <title>Identification of a novel gene (ADPRTL1) encoding a potential poly(ADP-ribosyl)transferase protein.</title>
        <authorList>
            <person name="Still I.H."/>
            <person name="Vince P."/>
            <person name="Cowell J.K."/>
        </authorList>
    </citation>
    <scope>NUCLEOTIDE SEQUENCE [MRNA]</scope>
    <scope>VARIANTS ASN-873; ALA-1265 AND ARG-1280</scope>
    <source>
        <tissue>Thymus</tissue>
    </source>
</reference>
<reference key="3">
    <citation type="journal article" date="1996" name="DNA Res.">
        <title>Prediction of the coding sequences of unidentified human genes. V. The coding sequences of 40 new genes (KIAA0161-KIAA0200) deduced by analysis of cDNA clones from human cell line KG-1.</title>
        <authorList>
            <person name="Nagase T."/>
            <person name="Seki N."/>
            <person name="Ishikawa K."/>
            <person name="Tanaka A."/>
            <person name="Nomura N."/>
        </authorList>
    </citation>
    <scope>NUCLEOTIDE SEQUENCE [LARGE SCALE MRNA]</scope>
    <scope>VARIANTS ASN-873; ALA-1265 AND ARG-1280</scope>
    <source>
        <tissue>Bone marrow</tissue>
    </source>
</reference>
<reference key="4">
    <citation type="submission" date="2003-01" db="EMBL/GenBank/DDBJ databases">
        <authorList>
            <person name="Ohara O."/>
            <person name="Nagase T."/>
            <person name="Kikuno R."/>
            <person name="Nomura N."/>
        </authorList>
    </citation>
    <scope>SEQUENCE REVISION</scope>
</reference>
<reference key="5">
    <citation type="journal article" date="2004" name="Nature">
        <title>The DNA sequence and analysis of human chromosome 13.</title>
        <authorList>
            <person name="Dunham A."/>
            <person name="Matthews L.H."/>
            <person name="Burton J."/>
            <person name="Ashurst J.L."/>
            <person name="Howe K.L."/>
            <person name="Ashcroft K.J."/>
            <person name="Beare D.M."/>
            <person name="Burford D.C."/>
            <person name="Hunt S.E."/>
            <person name="Griffiths-Jones S."/>
            <person name="Jones M.C."/>
            <person name="Keenan S.J."/>
            <person name="Oliver K."/>
            <person name="Scott C.E."/>
            <person name="Ainscough R."/>
            <person name="Almeida J.P."/>
            <person name="Ambrose K.D."/>
            <person name="Andrews D.T."/>
            <person name="Ashwell R.I.S."/>
            <person name="Babbage A.K."/>
            <person name="Bagguley C.L."/>
            <person name="Bailey J."/>
            <person name="Bannerjee R."/>
            <person name="Barlow K.F."/>
            <person name="Bates K."/>
            <person name="Beasley H."/>
            <person name="Bird C.P."/>
            <person name="Bray-Allen S."/>
            <person name="Brown A.J."/>
            <person name="Brown J.Y."/>
            <person name="Burrill W."/>
            <person name="Carder C."/>
            <person name="Carter N.P."/>
            <person name="Chapman J.C."/>
            <person name="Clamp M.E."/>
            <person name="Clark S.Y."/>
            <person name="Clarke G."/>
            <person name="Clee C.M."/>
            <person name="Clegg S.C."/>
            <person name="Cobley V."/>
            <person name="Collins J.E."/>
            <person name="Corby N."/>
            <person name="Coville G.J."/>
            <person name="Deloukas P."/>
            <person name="Dhami P."/>
            <person name="Dunham I."/>
            <person name="Dunn M."/>
            <person name="Earthrowl M.E."/>
            <person name="Ellington A.G."/>
            <person name="Faulkner L."/>
            <person name="Frankish A.G."/>
            <person name="Frankland J."/>
            <person name="French L."/>
            <person name="Garner P."/>
            <person name="Garnett J."/>
            <person name="Gilbert J.G.R."/>
            <person name="Gilson C.J."/>
            <person name="Ghori J."/>
            <person name="Grafham D.V."/>
            <person name="Gribble S.M."/>
            <person name="Griffiths C."/>
            <person name="Hall R.E."/>
            <person name="Hammond S."/>
            <person name="Harley J.L."/>
            <person name="Hart E.A."/>
            <person name="Heath P.D."/>
            <person name="Howden P.J."/>
            <person name="Huckle E.J."/>
            <person name="Hunt P.J."/>
            <person name="Hunt A.R."/>
            <person name="Johnson C."/>
            <person name="Johnson D."/>
            <person name="Kay M."/>
            <person name="Kimberley A.M."/>
            <person name="King A."/>
            <person name="Laird G.K."/>
            <person name="Langford C.J."/>
            <person name="Lawlor S."/>
            <person name="Leongamornlert D.A."/>
            <person name="Lloyd D.M."/>
            <person name="Lloyd C."/>
            <person name="Loveland J.E."/>
            <person name="Lovell J."/>
            <person name="Martin S."/>
            <person name="Mashreghi-Mohammadi M."/>
            <person name="McLaren S.J."/>
            <person name="McMurray A."/>
            <person name="Milne S."/>
            <person name="Moore M.J.F."/>
            <person name="Nickerson T."/>
            <person name="Palmer S.A."/>
            <person name="Pearce A.V."/>
            <person name="Peck A.I."/>
            <person name="Pelan S."/>
            <person name="Phillimore B."/>
            <person name="Porter K.M."/>
            <person name="Rice C.M."/>
            <person name="Searle S."/>
            <person name="Sehra H.K."/>
            <person name="Shownkeen R."/>
            <person name="Skuce C.D."/>
            <person name="Smith M."/>
            <person name="Steward C.A."/>
            <person name="Sycamore N."/>
            <person name="Tester J."/>
            <person name="Thomas D.W."/>
            <person name="Tracey A."/>
            <person name="Tromans A."/>
            <person name="Tubby B."/>
            <person name="Wall M."/>
            <person name="Wallis J.M."/>
            <person name="West A.P."/>
            <person name="Whitehead S.L."/>
            <person name="Willey D.L."/>
            <person name="Wilming L."/>
            <person name="Wray P.W."/>
            <person name="Wright M.W."/>
            <person name="Young L."/>
            <person name="Coulson A."/>
            <person name="Durbin R.M."/>
            <person name="Hubbard T."/>
            <person name="Sulston J.E."/>
            <person name="Beck S."/>
            <person name="Bentley D.R."/>
            <person name="Rogers J."/>
            <person name="Ross M.T."/>
        </authorList>
    </citation>
    <scope>NUCLEOTIDE SEQUENCE [LARGE SCALE GENOMIC DNA]</scope>
</reference>
<reference key="6">
    <citation type="journal article" date="1999" name="FEBS Lett.">
        <title>The nuclear protein PH5P of the inter-alpha-inhibitor superfamily: a missing link between poly(ADP-ribose)polymerase and the inter-alpha-inhibitor family and a novel actor of DNA repair?</title>
        <authorList>
            <person name="Jean L."/>
            <person name="Risler J.-L."/>
            <person name="Nagase T."/>
            <person name="Coulouarn C."/>
            <person name="Nomura N."/>
            <person name="Salier J.-P."/>
        </authorList>
    </citation>
    <scope>DISCUSSION OF SEQUENCE</scope>
</reference>
<reference key="7">
    <citation type="journal article" date="1999" name="J. Biol. Chem.">
        <title>Vaults and telomerase share a common subunit, TEP1.</title>
        <authorList>
            <person name="Kickhoefer V.A."/>
            <person name="Stephen A.G."/>
            <person name="Harrington L."/>
            <person name="Robinson M.O."/>
            <person name="Rome L.H."/>
        </authorList>
    </citation>
    <scope>ASSOCIATION WITH TEP1</scope>
</reference>
<reference key="8">
    <citation type="journal article" date="2004" name="Mol. Cell. Biol.">
        <title>Vault poly(ADP-ribose) polymerase is associated with mammalian telomerase and is dispensable for telomerase function and vault structure in vivo.</title>
        <authorList>
            <person name="Liu Y."/>
            <person name="Snow B.E."/>
            <person name="Kickhoefer V.A."/>
            <person name="Erdmann N."/>
            <person name="Zhou W."/>
            <person name="Wakeham A."/>
            <person name="Gomez M."/>
            <person name="Rome L.H."/>
            <person name="Harrington L."/>
        </authorList>
    </citation>
    <scope>INTERACTION WITH TEP1</scope>
</reference>
<reference key="9">
    <citation type="journal article" date="2008" name="Proc. Natl. Acad. Sci. U.S.A.">
        <title>A quantitative atlas of mitotic phosphorylation.</title>
        <authorList>
            <person name="Dephoure N."/>
            <person name="Zhou C."/>
            <person name="Villen J."/>
            <person name="Beausoleil S.A."/>
            <person name="Bakalarski C.E."/>
            <person name="Elledge S.J."/>
            <person name="Gygi S.P."/>
        </authorList>
    </citation>
    <scope>PHOSPHORYLATION [LARGE SCALE ANALYSIS] AT THR-101; SER-1236; SER-1335 AND SER-1504</scope>
    <scope>IDENTIFICATION BY MASS SPECTROMETRY [LARGE SCALE ANALYSIS]</scope>
    <source>
        <tissue>Cervix carcinoma</tissue>
    </source>
</reference>
<reference key="10">
    <citation type="journal article" date="2010" name="Sci. Signal.">
        <title>Quantitative phosphoproteomics reveals widespread full phosphorylation site occupancy during mitosis.</title>
        <authorList>
            <person name="Olsen J.V."/>
            <person name="Vermeulen M."/>
            <person name="Santamaria A."/>
            <person name="Kumar C."/>
            <person name="Miller M.L."/>
            <person name="Jensen L.J."/>
            <person name="Gnad F."/>
            <person name="Cox J."/>
            <person name="Jensen T.S."/>
            <person name="Nigg E.A."/>
            <person name="Brunak S."/>
            <person name="Mann M."/>
        </authorList>
    </citation>
    <scope>PHOSPHORYLATION [LARGE SCALE ANALYSIS] AT SER-1335</scope>
    <scope>IDENTIFICATION BY MASS SPECTROMETRY [LARGE SCALE ANALYSIS]</scope>
    <source>
        <tissue>Cervix carcinoma</tissue>
    </source>
</reference>
<reference key="11">
    <citation type="journal article" date="2010" name="Trends Biochem. Sci.">
        <title>Toward a unified nomenclature for mammalian ADP-ribosyltransferases.</title>
        <authorList>
            <person name="Hottiger M.O."/>
            <person name="Hassa P.O."/>
            <person name="Luscher B."/>
            <person name="Schuler H."/>
            <person name="Koch-Nolte F."/>
        </authorList>
    </citation>
    <scope>NOMENCLATURE</scope>
</reference>
<reference key="12">
    <citation type="journal article" date="2011" name="BMC Syst. Biol.">
        <title>Initial characterization of the human central proteome.</title>
        <authorList>
            <person name="Burkard T.R."/>
            <person name="Planyavsky M."/>
            <person name="Kaupe I."/>
            <person name="Breitwieser F.P."/>
            <person name="Buerckstuemmer T."/>
            <person name="Bennett K.L."/>
            <person name="Superti-Furga G."/>
            <person name="Colinge J."/>
        </authorList>
    </citation>
    <scope>IDENTIFICATION BY MASS SPECTROMETRY [LARGE SCALE ANALYSIS]</scope>
</reference>
<reference key="13">
    <citation type="journal article" date="2013" name="J. Proteome Res.">
        <title>Toward a comprehensive characterization of a human cancer cell phosphoproteome.</title>
        <authorList>
            <person name="Zhou H."/>
            <person name="Di Palma S."/>
            <person name="Preisinger C."/>
            <person name="Peng M."/>
            <person name="Polat A.N."/>
            <person name="Heck A.J."/>
            <person name="Mohammed S."/>
        </authorList>
    </citation>
    <scope>PHOSPHORYLATION [LARGE SCALE ANALYSIS] AT THR-333; SER-1236 AND SER-1335</scope>
    <scope>IDENTIFICATION BY MASS SPECTROMETRY [LARGE SCALE ANALYSIS]</scope>
    <source>
        <tissue>Cervix carcinoma</tissue>
        <tissue>Erythroleukemia</tissue>
    </source>
</reference>
<reference key="14">
    <citation type="journal article" date="2014" name="J. Proteomics">
        <title>An enzyme assisted RP-RPLC approach for in-depth analysis of human liver phosphoproteome.</title>
        <authorList>
            <person name="Bian Y."/>
            <person name="Song C."/>
            <person name="Cheng K."/>
            <person name="Dong M."/>
            <person name="Wang F."/>
            <person name="Huang J."/>
            <person name="Sun D."/>
            <person name="Wang L."/>
            <person name="Ye M."/>
            <person name="Zou H."/>
        </authorList>
    </citation>
    <scope>PHOSPHORYLATION [LARGE SCALE ANALYSIS] AT THR-101</scope>
    <scope>IDENTIFICATION BY MASS SPECTROMETRY [LARGE SCALE ANALYSIS]</scope>
    <source>
        <tissue>Liver</tissue>
    </source>
</reference>
<reference key="15">
    <citation type="journal article" date="2014" name="Nat. Commun.">
        <title>Family-wide analysis of poly(ADP-ribose) polymerase activity.</title>
        <authorList>
            <person name="Vyas S."/>
            <person name="Matic I."/>
            <person name="Uchima L."/>
            <person name="Rood J."/>
            <person name="Zaja R."/>
            <person name="Hay R.T."/>
            <person name="Ahel I."/>
            <person name="Chang P."/>
        </authorList>
    </citation>
    <scope>FUNCTION</scope>
</reference>
<reference key="16">
    <citation type="journal article" date="2014" name="Mol. Cell. Proteomics">
        <title>Immunoaffinity enrichment and mass spectrometry analysis of protein methylation.</title>
        <authorList>
            <person name="Guo A."/>
            <person name="Gu H."/>
            <person name="Zhou J."/>
            <person name="Mulhern D."/>
            <person name="Wang Y."/>
            <person name="Lee K.A."/>
            <person name="Yang V."/>
            <person name="Aguiar M."/>
            <person name="Kornhauser J."/>
            <person name="Jia X."/>
            <person name="Ren J."/>
            <person name="Beausoleil S.A."/>
            <person name="Silva J.C."/>
            <person name="Vemulapalli V."/>
            <person name="Bedford M.T."/>
            <person name="Comb M.J."/>
        </authorList>
    </citation>
    <scope>METHYLATION [LARGE SCALE ANALYSIS] AT ARG-1476</scope>
    <scope>IDENTIFICATION BY MASS SPECTROMETRY [LARGE SCALE ANALYSIS]</scope>
    <source>
        <tissue>Colon carcinoma</tissue>
    </source>
</reference>
<gene>
    <name evidence="17 20" type="primary">PARP4</name>
    <name evidence="16" type="synonym">ADPRTL1</name>
    <name evidence="18" type="synonym">KIAA0177</name>
    <name type="synonym">PARPL</name>
</gene>
<feature type="chain" id="PRO_0000211330" description="Protein mono-ADP-ribosyltransferase PARP4">
    <location>
        <begin position="1"/>
        <end position="1724"/>
    </location>
</feature>
<feature type="domain" description="BRCT" evidence="2">
    <location>
        <begin position="1"/>
        <end position="94"/>
    </location>
</feature>
<feature type="domain" description="PARP alpha-helical" evidence="5">
    <location>
        <begin position="242"/>
        <end position="370"/>
    </location>
</feature>
<feature type="domain" description="PARP catalytic" evidence="4">
    <location>
        <begin position="369"/>
        <end position="573"/>
    </location>
</feature>
<feature type="domain" description="VIT" evidence="6">
    <location>
        <begin position="607"/>
        <end position="735"/>
    </location>
</feature>
<feature type="domain" description="VWFA" evidence="3">
    <location>
        <begin position="876"/>
        <end position="1046"/>
    </location>
</feature>
<feature type="region of interest" description="Disordered" evidence="7">
    <location>
        <begin position="97"/>
        <end position="123"/>
    </location>
</feature>
<feature type="region of interest" description="Disordered" evidence="7">
    <location>
        <begin position="1408"/>
        <end position="1452"/>
    </location>
</feature>
<feature type="region of interest" description="Interaction with the major vault protein" evidence="8">
    <location>
        <begin position="1562"/>
        <end position="1724"/>
    </location>
</feature>
<feature type="short sequence motif" description="Nuclear localization signal" evidence="1">
    <location>
        <begin position="19"/>
        <end position="25"/>
    </location>
</feature>
<feature type="short sequence motif" description="Nuclear localization signal" evidence="1">
    <location>
        <begin position="1237"/>
        <end position="1249"/>
    </location>
</feature>
<feature type="modified residue" description="Phosphothreonine" evidence="21 25">
    <location>
        <position position="101"/>
    </location>
</feature>
<feature type="modified residue" description="Phosphothreonine" evidence="23">
    <location>
        <position position="333"/>
    </location>
</feature>
<feature type="modified residue" description="Phosphoserine" evidence="21 23">
    <location>
        <position position="1236"/>
    </location>
</feature>
<feature type="modified residue" description="Phosphoserine" evidence="21 22 23">
    <location>
        <position position="1335"/>
    </location>
</feature>
<feature type="modified residue" description="Asymmetric dimethylarginine" evidence="24">
    <location>
        <position position="1476"/>
    </location>
</feature>
<feature type="modified residue" description="Phosphoserine" evidence="21">
    <location>
        <position position="1504"/>
    </location>
</feature>
<feature type="sequence variant" id="VAR_056645" description="In dbSNP:rs35200240.">
    <original>I</original>
    <variation>V</variation>
    <location>
        <position position="81"/>
    </location>
</feature>
<feature type="sequence variant" id="VAR_056646" description="In dbSNP:rs9578751.">
    <original>S</original>
    <variation>N</variation>
    <location>
        <position position="122"/>
    </location>
</feature>
<feature type="sequence variant" id="VAR_056647" description="In dbSNP:rs9318600.">
    <original>F</original>
    <variation>Y</variation>
    <location>
        <position position="215"/>
    </location>
</feature>
<feature type="sequence variant" id="VAR_056648" description="In dbSNP:rs4986818.">
    <original>P</original>
    <variation>L</variation>
    <location>
        <position position="792"/>
    </location>
</feature>
<feature type="sequence variant" id="VAR_056649" description="In dbSNP:rs7140044." evidence="10 13">
    <original>S</original>
    <variation>N</variation>
    <location>
        <position position="873"/>
    </location>
</feature>
<feature type="sequence variant" id="VAR_056650" description="In dbSNP:rs2275660." evidence="8">
    <original>A</original>
    <variation>T</variation>
    <location>
        <position position="899"/>
    </location>
</feature>
<feature type="sequence variant" id="VAR_056651" description="In dbSNP:rs34689435.">
    <original>K</original>
    <variation>R</variation>
    <location>
        <position position="991"/>
    </location>
</feature>
<feature type="sequence variant" id="VAR_056652" description="In dbSNP:rs9581043.">
    <original>V</original>
    <variation>I</variation>
    <location>
        <position position="1012"/>
    </location>
</feature>
<feature type="sequence variant" id="VAR_056653" description="In dbSNP:rs4986822.">
    <original>S</original>
    <variation>T</variation>
    <location>
        <position position="1253"/>
    </location>
</feature>
<feature type="sequence variant" id="VAR_016090" description="In dbSNP:rs1050110." evidence="10 13">
    <original>G</original>
    <variation>A</variation>
    <location>
        <position position="1265"/>
    </location>
</feature>
<feature type="sequence variant" id="VAR_016091" description="In dbSNP:rs13428." evidence="10 13">
    <original>G</original>
    <variation>R</variation>
    <location>
        <position position="1280"/>
    </location>
</feature>
<feature type="sequence conflict" description="In Ref. 1; AAD47250." evidence="19" ref="1">
    <original>S</original>
    <variation>P</variation>
    <location>
        <position position="519"/>
    </location>
</feature>
<feature type="sequence conflict" description="In Ref. 2; AAC62491 and 3; BAA11494." evidence="19" ref="2 3">
    <original>Q</original>
    <variation>E</variation>
    <location>
        <position position="897"/>
    </location>
</feature>
<feature type="sequence conflict" description="In Ref. 2; AAC62491 and 3; BAA11494." evidence="19" ref="2 3">
    <original>M</original>
    <variation>A</variation>
    <location>
        <position position="936"/>
    </location>
</feature>
<feature type="sequence conflict" description="In Ref. 1; AAD47250." evidence="19" ref="1">
    <original>M</original>
    <variation>T</variation>
    <location>
        <position position="936"/>
    </location>
</feature>
<feature type="sequence conflict" description="In Ref. 1; AAD47250 and 2; AAC62491." evidence="19" ref="1 2">
    <original>V</original>
    <variation>A</variation>
    <location>
        <position position="1065"/>
    </location>
</feature>
<feature type="sequence conflict" description="In Ref. 1; AAD47250, 2; AAC62491 and 3; BAA11494." evidence="19" ref="1 2 3">
    <original>L</original>
    <variation>R</variation>
    <location>
        <position position="1080"/>
    </location>
</feature>
<feature type="sequence conflict" description="In Ref. 1; AAD47250, 2; AAC62491 and 3; BAA11494." evidence="19" ref="1 2 3">
    <original>R</original>
    <variation>C</variation>
    <location>
        <position position="1108"/>
    </location>
</feature>
<feature type="sequence conflict" description="In Ref. 1; AAD47250, 2; AAC62491 and 3; BAA11494." evidence="19" ref="1 2 3">
    <original>P</original>
    <variation>T</variation>
    <location>
        <position position="1328"/>
    </location>
</feature>
<feature type="sequence conflict" description="In Ref. 1; AAD47250, 2; AAC62491 and 3; BAA11494." evidence="19" ref="1 2 3">
    <original>A</original>
    <variation>T</variation>
    <location>
        <position position="1331"/>
    </location>
</feature>
<feature type="sequence conflict" description="In Ref. 1; AAD47250, 2; AAC62491 and 3; BAA11494." evidence="19" ref="1 2 3">
    <original>S</original>
    <variation>A</variation>
    <location>
        <position position="1394"/>
    </location>
</feature>
<feature type="sequence conflict" description="In Ref. 1; AAD47250, 2; AAC62491 and 3; BAA11494." evidence="19" ref="1 2 3">
    <original>S</original>
    <variation>Y</variation>
    <location>
        <position position="1459"/>
    </location>
</feature>
<feature type="sequence conflict" description="In Ref. 1; AAD47250, 2; AAC62491 and 3; BAA11494." evidence="19" ref="1 2 3">
    <original>L</original>
    <variation>P</variation>
    <location>
        <position position="1550"/>
    </location>
</feature>
<feature type="sequence conflict" description="In Ref. 1; AAD47250." evidence="19" ref="1">
    <original>V</original>
    <variation>L</variation>
    <location>
        <position position="1555"/>
    </location>
</feature>
<feature type="sequence conflict" description="In Ref. 1; AAD47250, 2; AAC62491 and 3; BAA11494." evidence="19" ref="1 2 3">
    <original>I</original>
    <variation>T</variation>
    <location>
        <position position="1564"/>
    </location>
</feature>
<feature type="sequence conflict" description="In Ref. 1; AAD47250, 2; AAC62491 and 3; BAA11494." evidence="19" ref="1 2 3">
    <original>A</original>
    <variation>P</variation>
    <location>
        <position position="1656"/>
    </location>
</feature>
<feature type="helix" evidence="26">
    <location>
        <begin position="243"/>
        <end position="256"/>
    </location>
</feature>
<feature type="helix" evidence="26">
    <location>
        <begin position="261"/>
        <end position="282"/>
    </location>
</feature>
<feature type="helix" evidence="27">
    <location>
        <begin position="286"/>
        <end position="288"/>
    </location>
</feature>
<feature type="helix" evidence="27">
    <location>
        <begin position="291"/>
        <end position="310"/>
    </location>
</feature>
<feature type="helix" evidence="27">
    <location>
        <begin position="314"/>
        <end position="327"/>
    </location>
</feature>
<feature type="helix" evidence="27">
    <location>
        <begin position="340"/>
        <end position="359"/>
    </location>
</feature>
<feature type="helix" evidence="26">
    <location>
        <begin position="372"/>
        <end position="377"/>
    </location>
</feature>
<feature type="strand" evidence="26">
    <location>
        <begin position="380"/>
        <end position="385"/>
    </location>
</feature>
<feature type="strand" evidence="27">
    <location>
        <begin position="387"/>
        <end position="389"/>
    </location>
</feature>
<feature type="helix" evidence="26">
    <location>
        <begin position="390"/>
        <end position="400"/>
    </location>
</feature>
<feature type="strand" evidence="26">
    <location>
        <begin position="410"/>
        <end position="419"/>
    </location>
</feature>
<feature type="helix" evidence="26">
    <location>
        <begin position="422"/>
        <end position="425"/>
    </location>
</feature>
<feature type="helix" evidence="26">
    <location>
        <begin position="428"/>
        <end position="430"/>
    </location>
</feature>
<feature type="strand" evidence="26">
    <location>
        <begin position="433"/>
        <end position="439"/>
    </location>
</feature>
<feature type="helix" evidence="26">
    <location>
        <begin position="442"/>
        <end position="444"/>
    </location>
</feature>
<feature type="helix" evidence="26">
    <location>
        <begin position="445"/>
        <end position="451"/>
    </location>
</feature>
<feature type="strand" evidence="26">
    <location>
        <begin position="468"/>
        <end position="470"/>
    </location>
</feature>
<feature type="strand" evidence="26">
    <location>
        <begin position="473"/>
        <end position="480"/>
    </location>
</feature>
<feature type="helix" evidence="26">
    <location>
        <begin position="482"/>
        <end position="485"/>
    </location>
</feature>
<feature type="turn" evidence="26">
    <location>
        <begin position="486"/>
        <end position="488"/>
    </location>
</feature>
<feature type="turn" evidence="26">
    <location>
        <begin position="493"/>
        <end position="495"/>
    </location>
</feature>
<feature type="strand" evidence="26">
    <location>
        <begin position="498"/>
        <end position="506"/>
    </location>
</feature>
<feature type="strand" evidence="26">
    <location>
        <begin position="509"/>
        <end position="515"/>
    </location>
</feature>
<feature type="strand" evidence="26">
    <location>
        <begin position="528"/>
        <end position="532"/>
    </location>
</feature>
<feature type="strand" evidence="26">
    <location>
        <begin position="537"/>
        <end position="539"/>
    </location>
</feature>
<feature type="strand" evidence="26">
    <location>
        <begin position="542"/>
        <end position="545"/>
    </location>
</feature>
<feature type="strand" evidence="26">
    <location>
        <begin position="547"/>
        <end position="551"/>
    </location>
</feature>
<feature type="helix" evidence="26">
    <location>
        <begin position="553"/>
        <end position="555"/>
    </location>
</feature>
<feature type="strand" evidence="26">
    <location>
        <begin position="556"/>
        <end position="565"/>
    </location>
</feature>
<feature type="helix" evidence="26">
    <location>
        <begin position="567"/>
        <end position="569"/>
    </location>
</feature>
<sequence length="1724" mass="192595">MVMGIFANCIFCLKVKYLPQQQKKKLQTDIKENGGKFSFSLNPQCTHIILDNADVLSQYQLNSIQKNHVHIANPDFIWKSIREKRLLDVKNYDPYKPLDITPPPDQKASSSEVKTEGLCPDSATEEEDTVELTEFGMQNVEIPHLPQDFEVAKYNTLEKVGMEGGQEAVVVELQCSRDSRDCPFLISSHFLLDDGMETRRQFAIKKTSEDASEYFENYIEELKKQGFLLREHFTPEATQLASEQLQALLLEEVMNSSTLSQEVSDLVEMIWAEALGHLEHMLLKPVNRISLNDVSKAEGILLLVKAALKNGETAEQLQKMMTEFYRLIPHKGTMPKEVNLGLLAKKADLCQLIRDMVNVCETNLSKPNPPSLAKYRALRCKIEHVEQNTEEFLRVRKEVLQNHHSKSPVDVLQIFRVGRVNETTEFLSKLGNVRPLLHGSPVQNIVGILCRGLLLPKVVEDRGVQRTDVGNLGSGIYFSDSLSTSIKYSHPGETDGTRLLLICDVALGKCMDLHEKDFSLTEAPPGYDSVHGVSQTASVTTDFEDDEFVVYKTNQVKMKYIIKFSMPGDQIKDFHPSDHTELEEYRPEFSNFSKVEDYQLPDAKTSSSTKAGLQDASGNLVPLEDVHIKGRIIDTVAQVIVFQTYTNKSHVPIEAKYIFPLDDKAAVCGFEAFINGKHIVGEIKEKEEAQQEYLEAVTQGHGAYLMSQDAPDVFTVSVGNLPPKAKVLIKITYITELSILGTVGVFFMPATVAPWQQDKALNENLQDTVEKICIKEIGTKQSFSLTMSIEMPYVIEFIFSDTHELKQKRTDCKAVISTMEGSSLDSSGFSLHIGLSAAYLPRMWVEKHPEKESEACMLVFQPDLDVDLPDLASESEVIICLDCSSSMEGVTFLQAKQIALHALSLVGEKQKVNIIQFGTGYKELFSYPKHITSNTMAAEFIMSATPTMGNTDFWKTLRYLSLLYPARGSRNILLVSDGHLQDESLTLQLVKRSRPHTRLFACGIGSTANRHVLRILSQCGAGVFEYFNAKSKHSWRKQIEDQMTRLCSPSCHSVSVKWQQLNPDVPEALQAPAQVPSLFLNDRLLVYGFIPHCTQATLCALIQEKEFRTMVSTTELQKTTGTMIHKLAARALIRDYEDGILHENETSHEMKKQTLKSLIIKLSKENSLITQFTSFVAVEKRDENESPFPDIPKVSELIAKEDVDFLPYMSWQGEPQEAVRNQSLLASSEWPELRLSKRKHRKIPFSKRKMELSQPEVSEDFEEDGLGVLPAFTSNLERGGVEKLLDLSWTESCKPTATEPLFKKVSPWETSTSSFFPILAPAVGSYLPPTARAHSPASLSFASYRQVASFGSAAPPRQFDASQFSQGPVPGTCADWIPQSASCPTGPPQNPPSSPYCGIVFSGSSLSSAQSAPLQHPGGFTTRPSAGTFPELDSPQLHFSLPTDPDPIRGFGSYHPSASSPFHFQPSAASLTANLRLPMASALPEALCSQSRTTPVDLCLLEESVGSLEGSRCPVFAFQSSDTESDELSEVLQDSCFLQIKCDTKDDSILCFLEVKEEDEIVCIQHWQDAVPWTELLSLQTEDGFWKLTPELGLILNLNTNGLHSFLKQKGIQSLGVKGRECLLDLIATMLVLQFIRTRLEKEGIVFKSLMKMDDASISRNIPWAFEAIKQASEWVRRTEGQYPSICPRLELGNDWDSATKQLLGLQPISTVSPLHRVLHYSQG</sequence>
<protein>
    <recommendedName>
        <fullName evidence="19">Protein mono-ADP-ribosyltransferase PARP4</fullName>
        <ecNumber evidence="12">2.4.2.-</ecNumber>
    </recommendedName>
    <alternativeName>
        <fullName evidence="15">193 kDa vault protein</fullName>
    </alternativeName>
    <alternativeName>
        <fullName evidence="17">ADP-ribosyltransferase diphtheria toxin-like 4</fullName>
        <shortName evidence="17">ARTD4</shortName>
    </alternativeName>
    <alternativeName>
        <fullName evidence="14">PARP-related/IalphaI-related H5/proline-rich</fullName>
        <shortName evidence="14">PH5P</shortName>
    </alternativeName>
    <alternativeName>
        <fullName evidence="17">Poly [ADP-ribose] polymerase 4</fullName>
        <shortName evidence="17">PARP-4</shortName>
    </alternativeName>
    <alternativeName>
        <fullName evidence="15">Vault poly(ADP-ribose) polymerase</fullName>
        <shortName evidence="15">VPARP</shortName>
    </alternativeName>
</protein>
<accession>Q9UKK3</accession>
<accession>O75903</accession>
<accession>Q14682</accession>
<accession>Q5QNZ9</accession>
<accession>Q9H1M6</accession>
<dbReference type="EC" id="2.4.2.-" evidence="12"/>
<dbReference type="EMBL" id="AF158255">
    <property type="protein sequence ID" value="AAD47250.1"/>
    <property type="molecule type" value="mRNA"/>
</dbReference>
<dbReference type="EMBL" id="AF057160">
    <property type="protein sequence ID" value="AAC62491.1"/>
    <property type="molecule type" value="mRNA"/>
</dbReference>
<dbReference type="EMBL" id="D79999">
    <property type="protein sequence ID" value="BAA11494.2"/>
    <property type="status" value="ALT_INIT"/>
    <property type="molecule type" value="mRNA"/>
</dbReference>
<dbReference type="EMBL" id="AL359763">
    <property type="status" value="NOT_ANNOTATED_CDS"/>
    <property type="molecule type" value="Genomic_DNA"/>
</dbReference>
<dbReference type="CCDS" id="CCDS9307.1"/>
<dbReference type="RefSeq" id="NP_006428.2">
    <property type="nucleotide sequence ID" value="NM_006437.4"/>
</dbReference>
<dbReference type="RefSeq" id="XP_011533234.1">
    <property type="nucleotide sequence ID" value="XM_011534932.2"/>
</dbReference>
<dbReference type="PDB" id="8SWY">
    <property type="method" value="X-ray"/>
    <property type="resolution" value="2.55 A"/>
    <property type="chains" value="A/B/C=242-282, A/B/C=365-573"/>
</dbReference>
<dbReference type="PDB" id="8SWZ">
    <property type="method" value="X-ray"/>
    <property type="resolution" value="3.00 A"/>
    <property type="chains" value="A/B/C=242-282, A/B/C=365-573"/>
</dbReference>
<dbReference type="PDB" id="8SX1">
    <property type="method" value="X-ray"/>
    <property type="resolution" value="4.20 A"/>
    <property type="chains" value="A/B/C/D/E/F/G/H=242-573"/>
</dbReference>
<dbReference type="PDB" id="8SX2">
    <property type="method" value="X-ray"/>
    <property type="resolution" value="2.95 A"/>
    <property type="chains" value="A/B=242-573"/>
</dbReference>
<dbReference type="PDB" id="9BW6">
    <property type="method" value="EM"/>
    <property type="resolution" value="2.90 A"/>
    <property type="chains" value="B/D=1-1724"/>
</dbReference>
<dbReference type="PDB" id="9BW7">
    <property type="method" value="EM"/>
    <property type="resolution" value="2.90 A"/>
    <property type="chains" value="B/D=1-1724"/>
</dbReference>
<dbReference type="PDBsum" id="8SWY"/>
<dbReference type="PDBsum" id="8SWZ"/>
<dbReference type="PDBsum" id="8SX1"/>
<dbReference type="PDBsum" id="8SX2"/>
<dbReference type="PDBsum" id="9BW6"/>
<dbReference type="PDBsum" id="9BW7"/>
<dbReference type="EMDB" id="EMD-44955"/>
<dbReference type="EMDB" id="EMD-44957"/>
<dbReference type="EMDB" id="EMD-44960"/>
<dbReference type="SMR" id="Q9UKK3"/>
<dbReference type="BioGRID" id="106653">
    <property type="interactions" value="56"/>
</dbReference>
<dbReference type="ComplexPortal" id="CPX-10181">
    <property type="entry name" value="Vault ribonucleoprotein complex"/>
</dbReference>
<dbReference type="FunCoup" id="Q9UKK3">
    <property type="interactions" value="828"/>
</dbReference>
<dbReference type="IntAct" id="Q9UKK3">
    <property type="interactions" value="36"/>
</dbReference>
<dbReference type="MINT" id="Q9UKK3"/>
<dbReference type="STRING" id="9606.ENSP00000371419"/>
<dbReference type="BindingDB" id="Q9UKK3"/>
<dbReference type="ChEMBL" id="CHEMBL6142"/>
<dbReference type="DrugCentral" id="Q9UKK3"/>
<dbReference type="CarbonylDB" id="Q9UKK3"/>
<dbReference type="GlyCosmos" id="Q9UKK3">
    <property type="glycosylation" value="3 sites, 1 glycan"/>
</dbReference>
<dbReference type="GlyGen" id="Q9UKK3">
    <property type="glycosylation" value="5 sites, 1 O-linked glycan (4 sites)"/>
</dbReference>
<dbReference type="iPTMnet" id="Q9UKK3"/>
<dbReference type="PhosphoSitePlus" id="Q9UKK3"/>
<dbReference type="SwissPalm" id="Q9UKK3"/>
<dbReference type="BioMuta" id="PARP4"/>
<dbReference type="DMDM" id="308153574"/>
<dbReference type="jPOST" id="Q9UKK3"/>
<dbReference type="MassIVE" id="Q9UKK3"/>
<dbReference type="PaxDb" id="9606-ENSP00000371419"/>
<dbReference type="PeptideAtlas" id="Q9UKK3"/>
<dbReference type="ProteomicsDB" id="84811"/>
<dbReference type="Pumba" id="Q9UKK3"/>
<dbReference type="Antibodypedia" id="1562">
    <property type="antibodies" value="199 antibodies from 27 providers"/>
</dbReference>
<dbReference type="DNASU" id="143"/>
<dbReference type="Ensembl" id="ENST00000381989.4">
    <property type="protein sequence ID" value="ENSP00000371419.3"/>
    <property type="gene ID" value="ENSG00000102699.6"/>
</dbReference>
<dbReference type="GeneID" id="143"/>
<dbReference type="KEGG" id="hsa:143"/>
<dbReference type="MANE-Select" id="ENST00000381989.4">
    <property type="protein sequence ID" value="ENSP00000371419.3"/>
    <property type="RefSeq nucleotide sequence ID" value="NM_006437.4"/>
    <property type="RefSeq protein sequence ID" value="NP_006428.2"/>
</dbReference>
<dbReference type="UCSC" id="uc001upl.4">
    <property type="organism name" value="human"/>
</dbReference>
<dbReference type="AGR" id="HGNC:271"/>
<dbReference type="CTD" id="143"/>
<dbReference type="DisGeNET" id="143"/>
<dbReference type="GeneCards" id="PARP4"/>
<dbReference type="HGNC" id="HGNC:271">
    <property type="gene designation" value="PARP4"/>
</dbReference>
<dbReference type="HPA" id="ENSG00000102699">
    <property type="expression patterns" value="Low tissue specificity"/>
</dbReference>
<dbReference type="MIM" id="607519">
    <property type="type" value="gene"/>
</dbReference>
<dbReference type="neXtProt" id="NX_Q9UKK3"/>
<dbReference type="OpenTargets" id="ENSG00000102699"/>
<dbReference type="PharmGKB" id="PA24591"/>
<dbReference type="VEuPathDB" id="HostDB:ENSG00000102699"/>
<dbReference type="eggNOG" id="KOG1037">
    <property type="taxonomic scope" value="Eukaryota"/>
</dbReference>
<dbReference type="GeneTree" id="ENSGT00940000160555"/>
<dbReference type="HOGENOM" id="CLU_001437_0_0_1"/>
<dbReference type="InParanoid" id="Q9UKK3"/>
<dbReference type="OMA" id="PHKGTMP"/>
<dbReference type="OrthoDB" id="1729737at2759"/>
<dbReference type="PAN-GO" id="Q9UKK3">
    <property type="GO annotations" value="3 GO annotations based on evolutionary models"/>
</dbReference>
<dbReference type="PhylomeDB" id="Q9UKK3"/>
<dbReference type="TreeFam" id="TF329720"/>
<dbReference type="BRENDA" id="2.4.2.30">
    <property type="organism ID" value="2681"/>
</dbReference>
<dbReference type="PathwayCommons" id="Q9UKK3"/>
<dbReference type="Reactome" id="R-HSA-197264">
    <property type="pathway name" value="Nicotinamide salvaging"/>
</dbReference>
<dbReference type="Reactome" id="R-HSA-9683610">
    <property type="pathway name" value="Maturation of nucleoprotein"/>
</dbReference>
<dbReference type="Reactome" id="R-HSA-9694631">
    <property type="pathway name" value="Maturation of nucleoprotein"/>
</dbReference>
<dbReference type="SignaLink" id="Q9UKK3"/>
<dbReference type="BioGRID-ORCS" id="143">
    <property type="hits" value="11 hits in 1156 CRISPR screens"/>
</dbReference>
<dbReference type="ChiTaRS" id="PARP4">
    <property type="organism name" value="human"/>
</dbReference>
<dbReference type="GeneWiki" id="PARP4"/>
<dbReference type="GenomeRNAi" id="143"/>
<dbReference type="Pharos" id="Q9UKK3">
    <property type="development level" value="Tchem"/>
</dbReference>
<dbReference type="PRO" id="PR:Q9UKK3"/>
<dbReference type="Proteomes" id="UP000005640">
    <property type="component" value="Chromosome 13"/>
</dbReference>
<dbReference type="RNAct" id="Q9UKK3">
    <property type="molecule type" value="protein"/>
</dbReference>
<dbReference type="Bgee" id="ENSG00000102699">
    <property type="expression patterns" value="Expressed in rectum and 100 other cell types or tissues"/>
</dbReference>
<dbReference type="GO" id="GO:0005737">
    <property type="term" value="C:cytoplasm"/>
    <property type="evidence" value="ECO:0000314"/>
    <property type="project" value="UniProtKB"/>
</dbReference>
<dbReference type="GO" id="GO:0005829">
    <property type="term" value="C:cytosol"/>
    <property type="evidence" value="ECO:0000314"/>
    <property type="project" value="HPA"/>
</dbReference>
<dbReference type="GO" id="GO:0070062">
    <property type="term" value="C:extracellular exosome"/>
    <property type="evidence" value="ECO:0007005"/>
    <property type="project" value="UniProtKB"/>
</dbReference>
<dbReference type="GO" id="GO:0016020">
    <property type="term" value="C:membrane"/>
    <property type="evidence" value="ECO:0007005"/>
    <property type="project" value="UniProtKB"/>
</dbReference>
<dbReference type="GO" id="GO:0005654">
    <property type="term" value="C:nucleoplasm"/>
    <property type="evidence" value="ECO:0000314"/>
    <property type="project" value="HPA"/>
</dbReference>
<dbReference type="GO" id="GO:0005634">
    <property type="term" value="C:nucleus"/>
    <property type="evidence" value="ECO:0000303"/>
    <property type="project" value="UniProtKB"/>
</dbReference>
<dbReference type="GO" id="GO:1990904">
    <property type="term" value="C:ribonucleoprotein complex"/>
    <property type="evidence" value="ECO:0000303"/>
    <property type="project" value="UniProtKB"/>
</dbReference>
<dbReference type="GO" id="GO:0005876">
    <property type="term" value="C:spindle microtubule"/>
    <property type="evidence" value="ECO:0000314"/>
    <property type="project" value="UniProtKB"/>
</dbReference>
<dbReference type="GO" id="GO:0003677">
    <property type="term" value="F:DNA binding"/>
    <property type="evidence" value="ECO:0000304"/>
    <property type="project" value="ProtInc"/>
</dbReference>
<dbReference type="GO" id="GO:0019899">
    <property type="term" value="F:enzyme binding"/>
    <property type="evidence" value="ECO:0000314"/>
    <property type="project" value="MGI"/>
</dbReference>
<dbReference type="GO" id="GO:0003950">
    <property type="term" value="F:NAD+ poly-ADP-ribosyltransferase activity"/>
    <property type="evidence" value="ECO:0000314"/>
    <property type="project" value="UniProtKB"/>
</dbReference>
<dbReference type="GO" id="GO:1990404">
    <property type="term" value="F:NAD+-protein mono-ADP-ribosyltransferase activity"/>
    <property type="evidence" value="ECO:0000314"/>
    <property type="project" value="UniProtKB"/>
</dbReference>
<dbReference type="GO" id="GO:0140806">
    <property type="term" value="F:NAD+-protein-aspartate ADP-ribosyltransferase activity"/>
    <property type="evidence" value="ECO:0007669"/>
    <property type="project" value="RHEA"/>
</dbReference>
<dbReference type="GO" id="GO:0140807">
    <property type="term" value="F:NAD+-protein-glutamate ADP-ribosyltransferase activity"/>
    <property type="evidence" value="ECO:0007669"/>
    <property type="project" value="RHEA"/>
</dbReference>
<dbReference type="GO" id="GO:0016779">
    <property type="term" value="F:nucleotidyltransferase activity"/>
    <property type="evidence" value="ECO:0007669"/>
    <property type="project" value="UniProtKB-KW"/>
</dbReference>
<dbReference type="GO" id="GO:0006974">
    <property type="term" value="P:DNA damage response"/>
    <property type="evidence" value="ECO:0000303"/>
    <property type="project" value="UniProtKB"/>
</dbReference>
<dbReference type="GO" id="GO:0006281">
    <property type="term" value="P:DNA repair"/>
    <property type="evidence" value="ECO:0000304"/>
    <property type="project" value="ProtInc"/>
</dbReference>
<dbReference type="GO" id="GO:0006954">
    <property type="term" value="P:inflammatory response"/>
    <property type="evidence" value="ECO:0000315"/>
    <property type="project" value="UniProtKB"/>
</dbReference>
<dbReference type="GO" id="GO:0036211">
    <property type="term" value="P:protein modification process"/>
    <property type="evidence" value="ECO:0000314"/>
    <property type="project" value="UniProtKB"/>
</dbReference>
<dbReference type="GO" id="GO:0009410">
    <property type="term" value="P:response to xenobiotic stimulus"/>
    <property type="evidence" value="ECO:0000303"/>
    <property type="project" value="UniProtKB"/>
</dbReference>
<dbReference type="CDD" id="cd17726">
    <property type="entry name" value="BRCT_PARP4_like"/>
    <property type="match status" value="1"/>
</dbReference>
<dbReference type="CDD" id="cd01437">
    <property type="entry name" value="parp_like"/>
    <property type="match status" value="1"/>
</dbReference>
<dbReference type="FunFam" id="1.20.142.10:FF:000008">
    <property type="entry name" value="Poly [ADP-ribose] polymerase"/>
    <property type="match status" value="1"/>
</dbReference>
<dbReference type="FunFam" id="3.40.50.10190:FF:000065">
    <property type="entry name" value="Poly [ADP-ribose] polymerase"/>
    <property type="match status" value="1"/>
</dbReference>
<dbReference type="FunFam" id="3.40.50.410:FF:000083">
    <property type="entry name" value="Poly [ADP-ribose] polymerase"/>
    <property type="match status" value="1"/>
</dbReference>
<dbReference type="FunFam" id="3.90.228.10:FF:000013">
    <property type="entry name" value="Poly [ADP-ribose] polymerase"/>
    <property type="match status" value="1"/>
</dbReference>
<dbReference type="Gene3D" id="3.90.228.10">
    <property type="match status" value="1"/>
</dbReference>
<dbReference type="Gene3D" id="3.40.50.10190">
    <property type="entry name" value="BRCT domain"/>
    <property type="match status" value="1"/>
</dbReference>
<dbReference type="Gene3D" id="1.20.142.10">
    <property type="entry name" value="Poly(ADP-ribose) polymerase, regulatory domain"/>
    <property type="match status" value="1"/>
</dbReference>
<dbReference type="Gene3D" id="3.40.50.410">
    <property type="entry name" value="von Willebrand factor, type A domain"/>
    <property type="match status" value="1"/>
</dbReference>
<dbReference type="InterPro" id="IPR001357">
    <property type="entry name" value="BRCT_dom"/>
</dbReference>
<dbReference type="InterPro" id="IPR036420">
    <property type="entry name" value="BRCT_dom_sf"/>
</dbReference>
<dbReference type="InterPro" id="IPR031273">
    <property type="entry name" value="PARP4"/>
</dbReference>
<dbReference type="InterPro" id="IPR012317">
    <property type="entry name" value="Poly(ADP-ribose)pol_cat_dom"/>
</dbReference>
<dbReference type="InterPro" id="IPR004102">
    <property type="entry name" value="Poly(ADP-ribose)pol_reg_dom"/>
</dbReference>
<dbReference type="InterPro" id="IPR036616">
    <property type="entry name" value="Poly(ADP-ribose)pol_reg_dom_sf"/>
</dbReference>
<dbReference type="InterPro" id="IPR013694">
    <property type="entry name" value="VIT"/>
</dbReference>
<dbReference type="InterPro" id="IPR002035">
    <property type="entry name" value="VWF_A"/>
</dbReference>
<dbReference type="InterPro" id="IPR036465">
    <property type="entry name" value="vWFA_dom_sf"/>
</dbReference>
<dbReference type="PANTHER" id="PTHR46530">
    <property type="entry name" value="PROTEIN MONO-ADP-RIBOSYLTRANSFERASE PARP4"/>
    <property type="match status" value="1"/>
</dbReference>
<dbReference type="PANTHER" id="PTHR46530:SF1">
    <property type="entry name" value="PROTEIN MONO-ADP-RIBOSYLTRANSFERASE PARP4"/>
    <property type="match status" value="1"/>
</dbReference>
<dbReference type="Pfam" id="PF00533">
    <property type="entry name" value="BRCT"/>
    <property type="match status" value="1"/>
</dbReference>
<dbReference type="Pfam" id="PF00644">
    <property type="entry name" value="PARP"/>
    <property type="match status" value="1"/>
</dbReference>
<dbReference type="Pfam" id="PF08487">
    <property type="entry name" value="VIT"/>
    <property type="match status" value="1"/>
</dbReference>
<dbReference type="Pfam" id="PF00092">
    <property type="entry name" value="VWA"/>
    <property type="match status" value="1"/>
</dbReference>
<dbReference type="SMART" id="SM00292">
    <property type="entry name" value="BRCT"/>
    <property type="match status" value="1"/>
</dbReference>
<dbReference type="SMART" id="SM00609">
    <property type="entry name" value="VIT"/>
    <property type="match status" value="1"/>
</dbReference>
<dbReference type="SMART" id="SM00327">
    <property type="entry name" value="VWA"/>
    <property type="match status" value="1"/>
</dbReference>
<dbReference type="SUPFAM" id="SSF56399">
    <property type="entry name" value="ADP-ribosylation"/>
    <property type="match status" value="1"/>
</dbReference>
<dbReference type="SUPFAM" id="SSF52113">
    <property type="entry name" value="BRCT domain"/>
    <property type="match status" value="1"/>
</dbReference>
<dbReference type="SUPFAM" id="SSF47587">
    <property type="entry name" value="Domain of poly(ADP-ribose) polymerase"/>
    <property type="match status" value="1"/>
</dbReference>
<dbReference type="SUPFAM" id="SSF53300">
    <property type="entry name" value="vWA-like"/>
    <property type="match status" value="1"/>
</dbReference>
<dbReference type="PROSITE" id="PS50172">
    <property type="entry name" value="BRCT"/>
    <property type="match status" value="1"/>
</dbReference>
<dbReference type="PROSITE" id="PS51060">
    <property type="entry name" value="PARP_ALPHA_HD"/>
    <property type="match status" value="1"/>
</dbReference>
<dbReference type="PROSITE" id="PS51059">
    <property type="entry name" value="PARP_CATALYTIC"/>
    <property type="match status" value="1"/>
</dbReference>
<dbReference type="PROSITE" id="PS51468">
    <property type="entry name" value="VIT"/>
    <property type="match status" value="1"/>
</dbReference>
<dbReference type="PROSITE" id="PS50234">
    <property type="entry name" value="VWFA"/>
    <property type="match status" value="1"/>
</dbReference>
<organism>
    <name type="scientific">Homo sapiens</name>
    <name type="common">Human</name>
    <dbReference type="NCBI Taxonomy" id="9606"/>
    <lineage>
        <taxon>Eukaryota</taxon>
        <taxon>Metazoa</taxon>
        <taxon>Chordata</taxon>
        <taxon>Craniata</taxon>
        <taxon>Vertebrata</taxon>
        <taxon>Euteleostomi</taxon>
        <taxon>Mammalia</taxon>
        <taxon>Eutheria</taxon>
        <taxon>Euarchontoglires</taxon>
        <taxon>Primates</taxon>
        <taxon>Haplorrhini</taxon>
        <taxon>Catarrhini</taxon>
        <taxon>Hominidae</taxon>
        <taxon>Homo</taxon>
    </lineage>
</organism>
<evidence type="ECO:0000255" key="1"/>
<evidence type="ECO:0000255" key="2">
    <source>
        <dbReference type="PROSITE-ProRule" id="PRU00033"/>
    </source>
</evidence>
<evidence type="ECO:0000255" key="3">
    <source>
        <dbReference type="PROSITE-ProRule" id="PRU00219"/>
    </source>
</evidence>
<evidence type="ECO:0000255" key="4">
    <source>
        <dbReference type="PROSITE-ProRule" id="PRU00397"/>
    </source>
</evidence>
<evidence type="ECO:0000255" key="5">
    <source>
        <dbReference type="PROSITE-ProRule" id="PRU00398"/>
    </source>
</evidence>
<evidence type="ECO:0000255" key="6">
    <source>
        <dbReference type="PROSITE-ProRule" id="PRU00801"/>
    </source>
</evidence>
<evidence type="ECO:0000256" key="7">
    <source>
        <dbReference type="SAM" id="MobiDB-lite"/>
    </source>
</evidence>
<evidence type="ECO:0000269" key="8">
    <source>
    </source>
</evidence>
<evidence type="ECO:0000269" key="9">
    <source>
    </source>
</evidence>
<evidence type="ECO:0000269" key="10">
    <source>
    </source>
</evidence>
<evidence type="ECO:0000269" key="11">
    <source>
    </source>
</evidence>
<evidence type="ECO:0000269" key="12">
    <source>
    </source>
</evidence>
<evidence type="ECO:0000269" key="13">
    <source>
    </source>
</evidence>
<evidence type="ECO:0000303" key="14">
    <source>
    </source>
</evidence>
<evidence type="ECO:0000303" key="15">
    <source>
    </source>
</evidence>
<evidence type="ECO:0000303" key="16">
    <source>
    </source>
</evidence>
<evidence type="ECO:0000303" key="17">
    <source>
    </source>
</evidence>
<evidence type="ECO:0000303" key="18">
    <source>
    </source>
</evidence>
<evidence type="ECO:0000305" key="19"/>
<evidence type="ECO:0000312" key="20">
    <source>
        <dbReference type="HGNC" id="HGNC:271"/>
    </source>
</evidence>
<evidence type="ECO:0007744" key="21">
    <source>
    </source>
</evidence>
<evidence type="ECO:0007744" key="22">
    <source>
    </source>
</evidence>
<evidence type="ECO:0007744" key="23">
    <source>
    </source>
</evidence>
<evidence type="ECO:0007744" key="24">
    <source>
    </source>
</evidence>
<evidence type="ECO:0007744" key="25">
    <source>
    </source>
</evidence>
<evidence type="ECO:0007829" key="26">
    <source>
        <dbReference type="PDB" id="8SWY"/>
    </source>
</evidence>
<evidence type="ECO:0007829" key="27">
    <source>
        <dbReference type="PDB" id="8SX2"/>
    </source>
</evidence>
<keyword id="KW-0002">3D-structure</keyword>
<keyword id="KW-0963">Cytoplasm</keyword>
<keyword id="KW-0206">Cytoskeleton</keyword>
<keyword id="KW-0903">Direct protein sequencing</keyword>
<keyword id="KW-0328">Glycosyltransferase</keyword>
<keyword id="KW-0488">Methylation</keyword>
<keyword id="KW-0520">NAD</keyword>
<keyword id="KW-0548">Nucleotidyltransferase</keyword>
<keyword id="KW-0539">Nucleus</keyword>
<keyword id="KW-0597">Phosphoprotein</keyword>
<keyword id="KW-1267">Proteomics identification</keyword>
<keyword id="KW-1185">Reference proteome</keyword>
<keyword id="KW-0687">Ribonucleoprotein</keyword>
<keyword id="KW-0808">Transferase</keyword>